<reference key="1">
    <citation type="journal article" date="1987" name="Mol. Gen. Genet.">
        <title>Nucleotide sequences from the colicin E8 operon: homology with plasmid ColE2-P9.</title>
        <authorList>
            <person name="Uchimura T."/>
            <person name="Lau P.C.K."/>
        </authorList>
    </citation>
    <scope>NUCLEOTIDE SEQUENCE [GENOMIC DNA]</scope>
</reference>
<reference key="2">
    <citation type="journal article" date="1988" name="J. Bacteriol.">
        <title>Colicin E8, a DNase which indicates an evolutionary relationship between colicins E2 and E3.</title>
        <authorList>
            <person name="Toba M."/>
            <person name="Masaki H."/>
            <person name="Ohta T."/>
        </authorList>
    </citation>
    <scope>NUCLEOTIDE SEQUENCE [GENOMIC DNA]</scope>
</reference>
<sequence>RFAHDPMAGGHRMWQMAGLKAQRAQTDVNNKQAAFDAAAKEKSDADAALSAAQERRKQKENKEKDAKDKLDKESKRNKPGKATGKGKPVGDKWLDDAGKDSGAPIPDRIADKLRDKEFKNFDDFRRKFWEEVSKDPELSKQFNPGNKKRLSQGLAPRARNKDTVGGRRSFELHHDKPISQDGGVYDMDNLRITTPKRHIDIHRGQ</sequence>
<proteinExistence type="inferred from homology"/>
<protein>
    <recommendedName>
        <fullName>Colicin-E8</fullName>
        <ecNumber>3.1.-.-</ecNumber>
    </recommendedName>
</protein>
<comment type="function">
    <text>This plasmid-coded bactericidal protein is an endonuclease active on both single- and double-stranded DNA but with undefined specificity.</text>
</comment>
<comment type="function">
    <text>Colicins are polypeptide toxins produced by and active against E.coli and closely related bacteria.</text>
</comment>
<comment type="similarity">
    <text evidence="3">Belongs to the colicin/pyosin nuclease family.</text>
</comment>
<name>CEA8_ECOLX</name>
<geneLocation type="plasmid">
    <name>ColE8</name>
</geneLocation>
<feature type="chain" id="PRO_0000218683" description="Colicin-E8">
    <location>
        <begin position="1" status="less than"/>
        <end position="205"/>
    </location>
</feature>
<feature type="region of interest" description="Disordered" evidence="2">
    <location>
        <begin position="24"/>
        <end position="109"/>
    </location>
</feature>
<feature type="region of interest" description="Disordered" evidence="2">
    <location>
        <begin position="136"/>
        <end position="187"/>
    </location>
</feature>
<feature type="compositionally biased region" description="Basic and acidic residues" evidence="2">
    <location>
        <begin position="53"/>
        <end position="76"/>
    </location>
</feature>
<feature type="compositionally biased region" description="Basic and acidic residues" evidence="2">
    <location>
        <begin position="88"/>
        <end position="99"/>
    </location>
</feature>
<feature type="compositionally biased region" description="Basic and acidic residues" evidence="2">
    <location>
        <begin position="159"/>
        <end position="178"/>
    </location>
</feature>
<feature type="binding site" evidence="1">
    <location>
        <position position="173"/>
    </location>
    <ligand>
        <name>Zn(2+)</name>
        <dbReference type="ChEBI" id="CHEBI:29105"/>
    </ligand>
</feature>
<feature type="binding site" evidence="1">
    <location>
        <position position="198"/>
    </location>
    <ligand>
        <name>Zn(2+)</name>
        <dbReference type="ChEBI" id="CHEBI:29105"/>
    </ligand>
</feature>
<feature type="binding site" evidence="1">
    <location>
        <position position="202"/>
    </location>
    <ligand>
        <name>Zn(2+)</name>
        <dbReference type="ChEBI" id="CHEBI:29105"/>
    </ligand>
</feature>
<feature type="non-terminal residue">
    <location>
        <position position="1"/>
    </location>
</feature>
<gene>
    <name type="primary">col</name>
</gene>
<accession>P09882</accession>
<evidence type="ECO:0000250" key="1"/>
<evidence type="ECO:0000256" key="2">
    <source>
        <dbReference type="SAM" id="MobiDB-lite"/>
    </source>
</evidence>
<evidence type="ECO:0000305" key="3"/>
<organism>
    <name type="scientific">Escherichia coli</name>
    <dbReference type="NCBI Taxonomy" id="562"/>
    <lineage>
        <taxon>Bacteria</taxon>
        <taxon>Pseudomonadati</taxon>
        <taxon>Pseudomonadota</taxon>
        <taxon>Gammaproteobacteria</taxon>
        <taxon>Enterobacterales</taxon>
        <taxon>Enterobacteriaceae</taxon>
        <taxon>Escherichia</taxon>
    </lineage>
</organism>
<dbReference type="EC" id="3.1.-.-"/>
<dbReference type="EMBL" id="M21404">
    <property type="protein sequence ID" value="AAA23073.1"/>
    <property type="molecule type" value="Genomic_DNA"/>
</dbReference>
<dbReference type="EMBL" id="X06119">
    <property type="protein sequence ID" value="CAA29491.1"/>
    <property type="molecule type" value="Genomic_DNA"/>
</dbReference>
<dbReference type="PIR" id="A28184">
    <property type="entry name" value="NDECE8"/>
</dbReference>
<dbReference type="SMR" id="P09882"/>
<dbReference type="GO" id="GO:0004519">
    <property type="term" value="F:endonuclease activity"/>
    <property type="evidence" value="ECO:0007669"/>
    <property type="project" value="UniProtKB-KW"/>
</dbReference>
<dbReference type="GO" id="GO:0046872">
    <property type="term" value="F:metal ion binding"/>
    <property type="evidence" value="ECO:0007669"/>
    <property type="project" value="UniProtKB-KW"/>
</dbReference>
<dbReference type="GO" id="GO:0042742">
    <property type="term" value="P:defense response to bacterium"/>
    <property type="evidence" value="ECO:0007669"/>
    <property type="project" value="UniProtKB-KW"/>
</dbReference>
<dbReference type="GO" id="GO:0031640">
    <property type="term" value="P:killing of cells of another organism"/>
    <property type="evidence" value="ECO:0007669"/>
    <property type="project" value="UniProtKB-KW"/>
</dbReference>
<dbReference type="CDD" id="cd00085">
    <property type="entry name" value="HNHc"/>
    <property type="match status" value="1"/>
</dbReference>
<dbReference type="FunFam" id="3.90.540.10:FF:000001">
    <property type="entry name" value="Colicin-E9"/>
    <property type="match status" value="1"/>
</dbReference>
<dbReference type="Gene3D" id="3.90.540.10">
    <property type="entry name" value="Colicin/pyocin, DNase domain"/>
    <property type="match status" value="1"/>
</dbReference>
<dbReference type="Gene3D" id="1.10.287.620">
    <property type="entry name" value="Helix Hairpins"/>
    <property type="match status" value="1"/>
</dbReference>
<dbReference type="InterPro" id="IPR037146">
    <property type="entry name" value="Colicin/pyocin_DNase_dom_sf"/>
</dbReference>
<dbReference type="InterPro" id="IPR044925">
    <property type="entry name" value="His-Me_finger_sf"/>
</dbReference>
<dbReference type="InterPro" id="IPR003615">
    <property type="entry name" value="HNH_nuc"/>
</dbReference>
<dbReference type="Pfam" id="PF21431">
    <property type="entry name" value="Col-Pyo_DNase"/>
    <property type="match status" value="1"/>
</dbReference>
<dbReference type="SMART" id="SM00507">
    <property type="entry name" value="HNHc"/>
    <property type="match status" value="1"/>
</dbReference>
<dbReference type="SUPFAM" id="SSF69985">
    <property type="entry name" value="Colicin E3 receptor domain"/>
    <property type="match status" value="1"/>
</dbReference>
<dbReference type="SUPFAM" id="SSF54060">
    <property type="entry name" value="His-Me finger endonucleases"/>
    <property type="match status" value="1"/>
</dbReference>
<keyword id="KW-0044">Antibiotic</keyword>
<keyword id="KW-0929">Antimicrobial</keyword>
<keyword id="KW-0078">Bacteriocin</keyword>
<keyword id="KW-0255">Endonuclease</keyword>
<keyword id="KW-0378">Hydrolase</keyword>
<keyword id="KW-0479">Metal-binding</keyword>
<keyword id="KW-0540">Nuclease</keyword>
<keyword id="KW-0614">Plasmid</keyword>
<keyword id="KW-0862">Zinc</keyword>